<organism>
    <name type="scientific">Vesicomyosocius okutanii subsp. Calyptogena okutanii (strain HA)</name>
    <dbReference type="NCBI Taxonomy" id="412965"/>
    <lineage>
        <taxon>Bacteria</taxon>
        <taxon>Pseudomonadati</taxon>
        <taxon>Pseudomonadota</taxon>
        <taxon>Gammaproteobacteria</taxon>
        <taxon>Candidatus Pseudothioglobaceae</taxon>
        <taxon>Candidatus Vesicomyosocius</taxon>
    </lineage>
</organism>
<keyword id="KW-0067">ATP-binding</keyword>
<keyword id="KW-0963">Cytoplasm</keyword>
<keyword id="KW-0418">Kinase</keyword>
<keyword id="KW-0545">Nucleotide biosynthesis</keyword>
<keyword id="KW-0547">Nucleotide-binding</keyword>
<keyword id="KW-1185">Reference proteome</keyword>
<keyword id="KW-0808">Transferase</keyword>
<sequence length="219" mass="24429">MNIILLGPPGAGKGTQATNICNKYSIPQISTGDMLRVAVKVGTPLGIEAKKIMDSGGLVSDNIIINLVKERIQHSDCKNGFLFDGFPRTITQAEALRKDSVKINFVIEIQVPDQEIIARMSGRRTHLKSGRTYHITYNQPKVEGIDDITGEKLVQRSDDSENTVRSRLDIYHNQTQPLVNYYQSWMDKDSNAPKYAAAIGIGTLDEVKDRIYNSLISYD</sequence>
<comment type="function">
    <text evidence="1">Catalyzes the reversible transfer of the terminal phosphate group between ATP and AMP. Plays an important role in cellular energy homeostasis and in adenine nucleotide metabolism.</text>
</comment>
<comment type="catalytic activity">
    <reaction evidence="1">
        <text>AMP + ATP = 2 ADP</text>
        <dbReference type="Rhea" id="RHEA:12973"/>
        <dbReference type="ChEBI" id="CHEBI:30616"/>
        <dbReference type="ChEBI" id="CHEBI:456215"/>
        <dbReference type="ChEBI" id="CHEBI:456216"/>
        <dbReference type="EC" id="2.7.4.3"/>
    </reaction>
</comment>
<comment type="pathway">
    <text evidence="1">Purine metabolism; AMP biosynthesis via salvage pathway; AMP from ADP: step 1/1.</text>
</comment>
<comment type="subunit">
    <text evidence="1">Monomer.</text>
</comment>
<comment type="subcellular location">
    <subcellularLocation>
        <location evidence="1">Cytoplasm</location>
    </subcellularLocation>
</comment>
<comment type="domain">
    <text evidence="1">Consists of three domains, a large central CORE domain and two small peripheral domains, NMPbind and LID, which undergo movements during catalysis. The LID domain closes over the site of phosphoryl transfer upon ATP binding. Assembling and dissambling the active center during each catalytic cycle provides an effective means to prevent ATP hydrolysis.</text>
</comment>
<comment type="similarity">
    <text evidence="1">Belongs to the adenylate kinase family.</text>
</comment>
<name>KAD_VESOH</name>
<evidence type="ECO:0000255" key="1">
    <source>
        <dbReference type="HAMAP-Rule" id="MF_00235"/>
    </source>
</evidence>
<feature type="chain" id="PRO_1000058934" description="Adenylate kinase">
    <location>
        <begin position="1"/>
        <end position="219"/>
    </location>
</feature>
<feature type="region of interest" description="NMP" evidence="1">
    <location>
        <begin position="30"/>
        <end position="59"/>
    </location>
</feature>
<feature type="region of interest" description="LID" evidence="1">
    <location>
        <begin position="122"/>
        <end position="159"/>
    </location>
</feature>
<feature type="binding site" evidence="1">
    <location>
        <begin position="10"/>
        <end position="15"/>
    </location>
    <ligand>
        <name>ATP</name>
        <dbReference type="ChEBI" id="CHEBI:30616"/>
    </ligand>
</feature>
<feature type="binding site" evidence="1">
    <location>
        <position position="31"/>
    </location>
    <ligand>
        <name>AMP</name>
        <dbReference type="ChEBI" id="CHEBI:456215"/>
    </ligand>
</feature>
<feature type="binding site" evidence="1">
    <location>
        <position position="36"/>
    </location>
    <ligand>
        <name>AMP</name>
        <dbReference type="ChEBI" id="CHEBI:456215"/>
    </ligand>
</feature>
<feature type="binding site" evidence="1">
    <location>
        <begin position="57"/>
        <end position="59"/>
    </location>
    <ligand>
        <name>AMP</name>
        <dbReference type="ChEBI" id="CHEBI:456215"/>
    </ligand>
</feature>
<feature type="binding site" evidence="1">
    <location>
        <begin position="85"/>
        <end position="88"/>
    </location>
    <ligand>
        <name>AMP</name>
        <dbReference type="ChEBI" id="CHEBI:456215"/>
    </ligand>
</feature>
<feature type="binding site" evidence="1">
    <location>
        <position position="92"/>
    </location>
    <ligand>
        <name>AMP</name>
        <dbReference type="ChEBI" id="CHEBI:456215"/>
    </ligand>
</feature>
<feature type="binding site" evidence="1">
    <location>
        <position position="123"/>
    </location>
    <ligand>
        <name>ATP</name>
        <dbReference type="ChEBI" id="CHEBI:30616"/>
    </ligand>
</feature>
<feature type="binding site" evidence="1">
    <location>
        <begin position="132"/>
        <end position="133"/>
    </location>
    <ligand>
        <name>ATP</name>
        <dbReference type="ChEBI" id="CHEBI:30616"/>
    </ligand>
</feature>
<feature type="binding site" evidence="1">
    <location>
        <position position="156"/>
    </location>
    <ligand>
        <name>AMP</name>
        <dbReference type="ChEBI" id="CHEBI:456215"/>
    </ligand>
</feature>
<feature type="binding site" evidence="1">
    <location>
        <position position="167"/>
    </location>
    <ligand>
        <name>AMP</name>
        <dbReference type="ChEBI" id="CHEBI:456215"/>
    </ligand>
</feature>
<feature type="binding site" evidence="1">
    <location>
        <position position="202"/>
    </location>
    <ligand>
        <name>ATP</name>
        <dbReference type="ChEBI" id="CHEBI:30616"/>
    </ligand>
</feature>
<dbReference type="EC" id="2.7.4.3" evidence="1"/>
<dbReference type="EMBL" id="AP009247">
    <property type="protein sequence ID" value="BAF61233.1"/>
    <property type="molecule type" value="Genomic_DNA"/>
</dbReference>
<dbReference type="RefSeq" id="WP_011929503.1">
    <property type="nucleotide sequence ID" value="NC_009465.1"/>
</dbReference>
<dbReference type="SMR" id="A5CXT4"/>
<dbReference type="STRING" id="412965.COSY_0097"/>
<dbReference type="KEGG" id="vok:COSY_0097"/>
<dbReference type="eggNOG" id="COG0563">
    <property type="taxonomic scope" value="Bacteria"/>
</dbReference>
<dbReference type="HOGENOM" id="CLU_032354_1_2_6"/>
<dbReference type="OrthoDB" id="9805030at2"/>
<dbReference type="UniPathway" id="UPA00588">
    <property type="reaction ID" value="UER00649"/>
</dbReference>
<dbReference type="Proteomes" id="UP000000247">
    <property type="component" value="Chromosome"/>
</dbReference>
<dbReference type="GO" id="GO:0005737">
    <property type="term" value="C:cytoplasm"/>
    <property type="evidence" value="ECO:0007669"/>
    <property type="project" value="UniProtKB-SubCell"/>
</dbReference>
<dbReference type="GO" id="GO:0004017">
    <property type="term" value="F:adenylate kinase activity"/>
    <property type="evidence" value="ECO:0007669"/>
    <property type="project" value="UniProtKB-UniRule"/>
</dbReference>
<dbReference type="GO" id="GO:0005524">
    <property type="term" value="F:ATP binding"/>
    <property type="evidence" value="ECO:0007669"/>
    <property type="project" value="UniProtKB-UniRule"/>
</dbReference>
<dbReference type="GO" id="GO:0044209">
    <property type="term" value="P:AMP salvage"/>
    <property type="evidence" value="ECO:0007669"/>
    <property type="project" value="UniProtKB-UniRule"/>
</dbReference>
<dbReference type="CDD" id="cd01428">
    <property type="entry name" value="ADK"/>
    <property type="match status" value="1"/>
</dbReference>
<dbReference type="FunFam" id="3.40.50.300:FF:000106">
    <property type="entry name" value="Adenylate kinase mitochondrial"/>
    <property type="match status" value="1"/>
</dbReference>
<dbReference type="Gene3D" id="3.40.50.300">
    <property type="entry name" value="P-loop containing nucleotide triphosphate hydrolases"/>
    <property type="match status" value="1"/>
</dbReference>
<dbReference type="HAMAP" id="MF_00235">
    <property type="entry name" value="Adenylate_kinase_Adk"/>
    <property type="match status" value="1"/>
</dbReference>
<dbReference type="InterPro" id="IPR006259">
    <property type="entry name" value="Adenyl_kin_sub"/>
</dbReference>
<dbReference type="InterPro" id="IPR000850">
    <property type="entry name" value="Adenylat/UMP-CMP_kin"/>
</dbReference>
<dbReference type="InterPro" id="IPR033690">
    <property type="entry name" value="Adenylat_kinase_CS"/>
</dbReference>
<dbReference type="InterPro" id="IPR007862">
    <property type="entry name" value="Adenylate_kinase_lid-dom"/>
</dbReference>
<dbReference type="InterPro" id="IPR027417">
    <property type="entry name" value="P-loop_NTPase"/>
</dbReference>
<dbReference type="NCBIfam" id="TIGR01351">
    <property type="entry name" value="adk"/>
    <property type="match status" value="1"/>
</dbReference>
<dbReference type="NCBIfam" id="NF001379">
    <property type="entry name" value="PRK00279.1-1"/>
    <property type="match status" value="1"/>
</dbReference>
<dbReference type="NCBIfam" id="NF001380">
    <property type="entry name" value="PRK00279.1-2"/>
    <property type="match status" value="1"/>
</dbReference>
<dbReference type="NCBIfam" id="NF001381">
    <property type="entry name" value="PRK00279.1-3"/>
    <property type="match status" value="1"/>
</dbReference>
<dbReference type="NCBIfam" id="NF011100">
    <property type="entry name" value="PRK14527.1"/>
    <property type="match status" value="1"/>
</dbReference>
<dbReference type="PANTHER" id="PTHR23359">
    <property type="entry name" value="NUCLEOTIDE KINASE"/>
    <property type="match status" value="1"/>
</dbReference>
<dbReference type="Pfam" id="PF00406">
    <property type="entry name" value="ADK"/>
    <property type="match status" value="1"/>
</dbReference>
<dbReference type="Pfam" id="PF05191">
    <property type="entry name" value="ADK_lid"/>
    <property type="match status" value="1"/>
</dbReference>
<dbReference type="PRINTS" id="PR00094">
    <property type="entry name" value="ADENYLTKNASE"/>
</dbReference>
<dbReference type="SUPFAM" id="SSF52540">
    <property type="entry name" value="P-loop containing nucleoside triphosphate hydrolases"/>
    <property type="match status" value="1"/>
</dbReference>
<dbReference type="PROSITE" id="PS00113">
    <property type="entry name" value="ADENYLATE_KINASE"/>
    <property type="match status" value="1"/>
</dbReference>
<gene>
    <name evidence="1" type="primary">adk</name>
    <name type="ordered locus">COSY_0097</name>
</gene>
<protein>
    <recommendedName>
        <fullName evidence="1">Adenylate kinase</fullName>
        <shortName evidence="1">AK</shortName>
        <ecNumber evidence="1">2.7.4.3</ecNumber>
    </recommendedName>
    <alternativeName>
        <fullName evidence="1">ATP-AMP transphosphorylase</fullName>
    </alternativeName>
    <alternativeName>
        <fullName evidence="1">ATP:AMP phosphotransferase</fullName>
    </alternativeName>
    <alternativeName>
        <fullName evidence="1">Adenylate monophosphate kinase</fullName>
    </alternativeName>
</protein>
<reference key="1">
    <citation type="journal article" date="2007" name="Curr. Biol.">
        <title>Reduced genome of the thioautotrophic intracellular symbiont in a deep-sea clam, Calyptogena okutanii.</title>
        <authorList>
            <person name="Kuwahara H."/>
            <person name="Yoshida T."/>
            <person name="Takaki Y."/>
            <person name="Shimamura S."/>
            <person name="Nishi S."/>
            <person name="Harada M."/>
            <person name="Matsuyama K."/>
            <person name="Takishita K."/>
            <person name="Kawato M."/>
            <person name="Uematsu K."/>
            <person name="Fujiwara Y."/>
            <person name="Sato T."/>
            <person name="Kato C."/>
            <person name="Kitagawa M."/>
            <person name="Kato I."/>
            <person name="Maruyama T."/>
        </authorList>
    </citation>
    <scope>NUCLEOTIDE SEQUENCE [LARGE SCALE GENOMIC DNA]</scope>
    <source>
        <strain>HA</strain>
    </source>
</reference>
<proteinExistence type="inferred from homology"/>
<accession>A5CXT4</accession>